<accession>A7ZJ19</accession>
<evidence type="ECO:0000255" key="1">
    <source>
        <dbReference type="HAMAP-Rule" id="MF_00659"/>
    </source>
</evidence>
<dbReference type="EMBL" id="CP000800">
    <property type="protein sequence ID" value="ABV20139.1"/>
    <property type="molecule type" value="Genomic_DNA"/>
</dbReference>
<dbReference type="RefSeq" id="WP_000850550.1">
    <property type="nucleotide sequence ID" value="NC_009801.1"/>
</dbReference>
<dbReference type="BMRB" id="A7ZJ19"/>
<dbReference type="SMR" id="A7ZJ19"/>
<dbReference type="GeneID" id="93776851"/>
<dbReference type="KEGG" id="ecw:EcE24377A_0656"/>
<dbReference type="HOGENOM" id="CLU_161438_2_1_6"/>
<dbReference type="Proteomes" id="UP000001122">
    <property type="component" value="Chromosome"/>
</dbReference>
<dbReference type="GO" id="GO:0005829">
    <property type="term" value="C:cytosol"/>
    <property type="evidence" value="ECO:0007669"/>
    <property type="project" value="TreeGrafter"/>
</dbReference>
<dbReference type="FunFam" id="3.30.70.260:FF:000002">
    <property type="entry name" value="UPF0250 protein YbeD"/>
    <property type="match status" value="1"/>
</dbReference>
<dbReference type="Gene3D" id="3.30.70.260">
    <property type="match status" value="1"/>
</dbReference>
<dbReference type="HAMAP" id="MF_00659">
    <property type="entry name" value="UPF0250"/>
    <property type="match status" value="1"/>
</dbReference>
<dbReference type="InterPro" id="IPR007454">
    <property type="entry name" value="UPF0250_YbeD-like"/>
</dbReference>
<dbReference type="InterPro" id="IPR027471">
    <property type="entry name" value="YbeD-like_sf"/>
</dbReference>
<dbReference type="NCBIfam" id="NF003447">
    <property type="entry name" value="PRK04998.1"/>
    <property type="match status" value="1"/>
</dbReference>
<dbReference type="PANTHER" id="PTHR38036">
    <property type="entry name" value="UPF0250 PROTEIN YBED"/>
    <property type="match status" value="1"/>
</dbReference>
<dbReference type="PANTHER" id="PTHR38036:SF1">
    <property type="entry name" value="UPF0250 PROTEIN YBED"/>
    <property type="match status" value="1"/>
</dbReference>
<dbReference type="Pfam" id="PF04359">
    <property type="entry name" value="DUF493"/>
    <property type="match status" value="1"/>
</dbReference>
<dbReference type="SUPFAM" id="SSF117991">
    <property type="entry name" value="YbeD/HP0495-like"/>
    <property type="match status" value="1"/>
</dbReference>
<feature type="chain" id="PRO_1000061861" description="UPF0250 protein YbeD">
    <location>
        <begin position="1"/>
        <end position="87"/>
    </location>
</feature>
<proteinExistence type="inferred from homology"/>
<organism>
    <name type="scientific">Escherichia coli O139:H28 (strain E24377A / ETEC)</name>
    <dbReference type="NCBI Taxonomy" id="331111"/>
    <lineage>
        <taxon>Bacteria</taxon>
        <taxon>Pseudomonadati</taxon>
        <taxon>Pseudomonadota</taxon>
        <taxon>Gammaproteobacteria</taxon>
        <taxon>Enterobacterales</taxon>
        <taxon>Enterobacteriaceae</taxon>
        <taxon>Escherichia</taxon>
    </lineage>
</organism>
<comment type="similarity">
    <text evidence="1">Belongs to the UPF0250 family.</text>
</comment>
<reference key="1">
    <citation type="journal article" date="2008" name="J. Bacteriol.">
        <title>The pangenome structure of Escherichia coli: comparative genomic analysis of E. coli commensal and pathogenic isolates.</title>
        <authorList>
            <person name="Rasko D.A."/>
            <person name="Rosovitz M.J."/>
            <person name="Myers G.S.A."/>
            <person name="Mongodin E.F."/>
            <person name="Fricke W.F."/>
            <person name="Gajer P."/>
            <person name="Crabtree J."/>
            <person name="Sebaihia M."/>
            <person name="Thomson N.R."/>
            <person name="Chaudhuri R."/>
            <person name="Henderson I.R."/>
            <person name="Sperandio V."/>
            <person name="Ravel J."/>
        </authorList>
    </citation>
    <scope>NUCLEOTIDE SEQUENCE [LARGE SCALE GENOMIC DNA]</scope>
    <source>
        <strain>E24377A / ETEC</strain>
    </source>
</reference>
<sequence length="87" mass="9827">MKTKLNELLEFPTPFTYKVMGQALPELVDQVVEVVQRHAPGDYTPTVKPSSKGNYHSVSITINATHIEQVETLYEELGKIDIVRMVL</sequence>
<keyword id="KW-1185">Reference proteome</keyword>
<gene>
    <name evidence="1" type="primary">ybeD</name>
    <name type="ordered locus">EcE24377A_0656</name>
</gene>
<name>YBED_ECO24</name>
<protein>
    <recommendedName>
        <fullName evidence="1">UPF0250 protein YbeD</fullName>
    </recommendedName>
</protein>